<dbReference type="PIR" id="S02027">
    <property type="entry name" value="S02027"/>
</dbReference>
<dbReference type="SMR" id="P10786"/>
<dbReference type="GO" id="GO:0072562">
    <property type="term" value="C:blood microparticle"/>
    <property type="evidence" value="ECO:0007669"/>
    <property type="project" value="TreeGrafter"/>
</dbReference>
<dbReference type="GO" id="GO:0031838">
    <property type="term" value="C:haptoglobin-hemoglobin complex"/>
    <property type="evidence" value="ECO:0007669"/>
    <property type="project" value="TreeGrafter"/>
</dbReference>
<dbReference type="GO" id="GO:0005833">
    <property type="term" value="C:hemoglobin complex"/>
    <property type="evidence" value="ECO:0007669"/>
    <property type="project" value="InterPro"/>
</dbReference>
<dbReference type="GO" id="GO:0031720">
    <property type="term" value="F:haptoglobin binding"/>
    <property type="evidence" value="ECO:0007669"/>
    <property type="project" value="TreeGrafter"/>
</dbReference>
<dbReference type="GO" id="GO:0020037">
    <property type="term" value="F:heme binding"/>
    <property type="evidence" value="ECO:0007669"/>
    <property type="project" value="InterPro"/>
</dbReference>
<dbReference type="GO" id="GO:0046872">
    <property type="term" value="F:metal ion binding"/>
    <property type="evidence" value="ECO:0007669"/>
    <property type="project" value="UniProtKB-KW"/>
</dbReference>
<dbReference type="GO" id="GO:0043177">
    <property type="term" value="F:organic acid binding"/>
    <property type="evidence" value="ECO:0007669"/>
    <property type="project" value="TreeGrafter"/>
</dbReference>
<dbReference type="GO" id="GO:0019825">
    <property type="term" value="F:oxygen binding"/>
    <property type="evidence" value="ECO:0007669"/>
    <property type="project" value="InterPro"/>
</dbReference>
<dbReference type="GO" id="GO:0005344">
    <property type="term" value="F:oxygen carrier activity"/>
    <property type="evidence" value="ECO:0007669"/>
    <property type="project" value="UniProtKB-KW"/>
</dbReference>
<dbReference type="GO" id="GO:0004601">
    <property type="term" value="F:peroxidase activity"/>
    <property type="evidence" value="ECO:0007669"/>
    <property type="project" value="TreeGrafter"/>
</dbReference>
<dbReference type="GO" id="GO:0042744">
    <property type="term" value="P:hydrogen peroxide catabolic process"/>
    <property type="evidence" value="ECO:0007669"/>
    <property type="project" value="TreeGrafter"/>
</dbReference>
<dbReference type="CDD" id="cd08925">
    <property type="entry name" value="Hb-beta-like"/>
    <property type="match status" value="1"/>
</dbReference>
<dbReference type="Gene3D" id="1.10.490.10">
    <property type="entry name" value="Globins"/>
    <property type="match status" value="1"/>
</dbReference>
<dbReference type="InterPro" id="IPR000971">
    <property type="entry name" value="Globin"/>
</dbReference>
<dbReference type="InterPro" id="IPR009050">
    <property type="entry name" value="Globin-like_sf"/>
</dbReference>
<dbReference type="InterPro" id="IPR012292">
    <property type="entry name" value="Globin/Proto"/>
</dbReference>
<dbReference type="InterPro" id="IPR002337">
    <property type="entry name" value="Hemoglobin_b"/>
</dbReference>
<dbReference type="InterPro" id="IPR050056">
    <property type="entry name" value="Hemoglobin_oxygen_transport"/>
</dbReference>
<dbReference type="PANTHER" id="PTHR11442">
    <property type="entry name" value="HEMOGLOBIN FAMILY MEMBER"/>
    <property type="match status" value="1"/>
</dbReference>
<dbReference type="PANTHER" id="PTHR11442:SF7">
    <property type="entry name" value="HEMOGLOBIN SUBUNIT EPSILON"/>
    <property type="match status" value="1"/>
</dbReference>
<dbReference type="Pfam" id="PF00042">
    <property type="entry name" value="Globin"/>
    <property type="match status" value="1"/>
</dbReference>
<dbReference type="PRINTS" id="PR00814">
    <property type="entry name" value="BETAHAEM"/>
</dbReference>
<dbReference type="SUPFAM" id="SSF46458">
    <property type="entry name" value="Globin-like"/>
    <property type="match status" value="1"/>
</dbReference>
<dbReference type="PROSITE" id="PS01033">
    <property type="entry name" value="GLOBIN"/>
    <property type="match status" value="1"/>
</dbReference>
<name>HBB2_TRICR</name>
<reference key="1">
    <citation type="journal article" date="1988" name="Biol. Chem. Hoppe-Seyler">
        <title>The first sequenced normal hemoglobin lacking histidine in position 146 of the beta-chains. The primary structures of the major and minor hemoglobin components of the great crested newt (Triturus cristatus, Urodela, Amphibia).</title>
        <authorList>
            <person name="Kleinschmidt T."/>
            <person name="Sgouros J.G."/>
            <person name="Braunitzer G."/>
        </authorList>
    </citation>
    <scope>PROTEIN SEQUENCE</scope>
</reference>
<protein>
    <recommendedName>
        <fullName>Hemoglobin subunit beta-2</fullName>
    </recommendedName>
    <alternativeName>
        <fullName>Beta-2-globin</fullName>
    </alternativeName>
    <alternativeName>
        <fullName>Hemoglobin beta-2 chain</fullName>
    </alternativeName>
    <alternativeName>
        <fullName>Hemoglobin beta-minor chain</fullName>
    </alternativeName>
</protein>
<organism>
    <name type="scientific">Triturus cristatus</name>
    <name type="common">Great crested newt</name>
    <name type="synonym">Warty newt</name>
    <dbReference type="NCBI Taxonomy" id="8323"/>
    <lineage>
        <taxon>Eukaryota</taxon>
        <taxon>Metazoa</taxon>
        <taxon>Chordata</taxon>
        <taxon>Craniata</taxon>
        <taxon>Vertebrata</taxon>
        <taxon>Euteleostomi</taxon>
        <taxon>Amphibia</taxon>
        <taxon>Batrachia</taxon>
        <taxon>Caudata</taxon>
        <taxon>Salamandroidea</taxon>
        <taxon>Salamandridae</taxon>
        <taxon>Pleurodelinae</taxon>
        <taxon>Triturus</taxon>
    </lineage>
</organism>
<feature type="chain" id="PRO_0000053139" description="Hemoglobin subunit beta-2">
    <location>
        <begin position="1"/>
        <end position="145"/>
    </location>
</feature>
<feature type="domain" description="Globin" evidence="1">
    <location>
        <begin position="2"/>
        <end position="145"/>
    </location>
</feature>
<feature type="binding site" description="distal binding residue">
    <location>
        <position position="63"/>
    </location>
    <ligand>
        <name>heme b</name>
        <dbReference type="ChEBI" id="CHEBI:60344"/>
    </ligand>
    <ligandPart>
        <name>Fe</name>
        <dbReference type="ChEBI" id="CHEBI:18248"/>
    </ligandPart>
</feature>
<feature type="binding site" description="proximal binding residue">
    <location>
        <position position="92"/>
    </location>
    <ligand>
        <name>heme b</name>
        <dbReference type="ChEBI" id="CHEBI:60344"/>
    </ligand>
    <ligandPart>
        <name>Fe</name>
        <dbReference type="ChEBI" id="CHEBI:18248"/>
    </ligandPart>
</feature>
<proteinExistence type="evidence at protein level"/>
<evidence type="ECO:0000255" key="1">
    <source>
        <dbReference type="PROSITE-ProRule" id="PRU00238"/>
    </source>
</evidence>
<accession>P10786</accession>
<sequence>VHLTAEDRKEIAAILGKVNVDSLGGQCLARLIVVNPWSRRYFHDFGDLSSCDAICRNPKVLAHGAKVMRSIVEATKHLDNLREYYADLSVTHSLKFYVDPENFKLFSGIVIVCLALTLQTDFSCHKQLAFEKLMKGVSHALGHGY</sequence>
<keyword id="KW-0903">Direct protein sequencing</keyword>
<keyword id="KW-0349">Heme</keyword>
<keyword id="KW-0408">Iron</keyword>
<keyword id="KW-0479">Metal-binding</keyword>
<keyword id="KW-0561">Oxygen transport</keyword>
<keyword id="KW-0813">Transport</keyword>
<gene>
    <name type="primary">HBB2</name>
</gene>
<comment type="function">
    <text>Involved in oxygen transport from the lung to the various peripheral tissues.</text>
</comment>
<comment type="subunit">
    <text>Minor hemoglobin is a tetramer of two alpha-2 chains and two beta-2 chains.</text>
</comment>
<comment type="tissue specificity">
    <text>Red blood cells.</text>
</comment>
<comment type="similarity">
    <text evidence="1">Belongs to the globin family.</text>
</comment>